<dbReference type="EC" id="3.6.4.12" evidence="1"/>
<dbReference type="EMBL" id="BX284605">
    <property type="protein sequence ID" value="CAB02793.2"/>
    <property type="molecule type" value="Genomic_DNA"/>
</dbReference>
<dbReference type="RefSeq" id="NP_505567.2">
    <property type="nucleotide sequence ID" value="NM_073166.5"/>
</dbReference>
<dbReference type="SMR" id="O17607"/>
<dbReference type="DIP" id="DIP-25966N"/>
<dbReference type="FunCoup" id="O17607">
    <property type="interactions" value="2617"/>
</dbReference>
<dbReference type="IntAct" id="O17607">
    <property type="interactions" value="4"/>
</dbReference>
<dbReference type="STRING" id="6239.C27H6.2.1"/>
<dbReference type="PaxDb" id="6239-C27H6.2"/>
<dbReference type="PeptideAtlas" id="O17607"/>
<dbReference type="EnsemblMetazoa" id="C27H6.2.1">
    <property type="protein sequence ID" value="C27H6.2.1"/>
    <property type="gene ID" value="WBGene00007784"/>
</dbReference>
<dbReference type="GeneID" id="179388"/>
<dbReference type="KEGG" id="cel:CELE_C27H6.2"/>
<dbReference type="UCSC" id="C27H6.2">
    <property type="organism name" value="c. elegans"/>
</dbReference>
<dbReference type="AGR" id="WB:WBGene00007784"/>
<dbReference type="CTD" id="179388"/>
<dbReference type="WormBase" id="C27H6.2">
    <property type="protein sequence ID" value="CE43279"/>
    <property type="gene ID" value="WBGene00007784"/>
    <property type="gene designation" value="ruvb-1"/>
</dbReference>
<dbReference type="eggNOG" id="KOG1942">
    <property type="taxonomic scope" value="Eukaryota"/>
</dbReference>
<dbReference type="GeneTree" id="ENSGT00940000153556"/>
<dbReference type="HOGENOM" id="CLU_028311_1_1_1"/>
<dbReference type="InParanoid" id="O17607"/>
<dbReference type="OMA" id="RTLPYNK"/>
<dbReference type="OrthoDB" id="10060499at2759"/>
<dbReference type="PhylomeDB" id="O17607"/>
<dbReference type="Reactome" id="R-CEL-5689880">
    <property type="pathway name" value="Ub-specific processing proteases"/>
</dbReference>
<dbReference type="PRO" id="PR:O17607"/>
<dbReference type="Proteomes" id="UP000001940">
    <property type="component" value="Chromosome V"/>
</dbReference>
<dbReference type="Bgee" id="WBGene00007784">
    <property type="expression patterns" value="Expressed in germ line (C elegans) and 4 other cell types or tissues"/>
</dbReference>
<dbReference type="GO" id="GO:0005737">
    <property type="term" value="C:cytoplasm"/>
    <property type="evidence" value="ECO:0000314"/>
    <property type="project" value="WormBase"/>
</dbReference>
<dbReference type="GO" id="GO:0031011">
    <property type="term" value="C:Ino80 complex"/>
    <property type="evidence" value="ECO:0000318"/>
    <property type="project" value="GO_Central"/>
</dbReference>
<dbReference type="GO" id="GO:0035267">
    <property type="term" value="C:NuA4 histone acetyltransferase complex"/>
    <property type="evidence" value="ECO:0000318"/>
    <property type="project" value="GO_Central"/>
</dbReference>
<dbReference type="GO" id="GO:0005634">
    <property type="term" value="C:nucleus"/>
    <property type="evidence" value="ECO:0000314"/>
    <property type="project" value="WormBase"/>
</dbReference>
<dbReference type="GO" id="GO:0097255">
    <property type="term" value="C:R2TP complex"/>
    <property type="evidence" value="ECO:0000318"/>
    <property type="project" value="GO_Central"/>
</dbReference>
<dbReference type="GO" id="GO:0000812">
    <property type="term" value="C:Swr1 complex"/>
    <property type="evidence" value="ECO:0000318"/>
    <property type="project" value="GO_Central"/>
</dbReference>
<dbReference type="GO" id="GO:0005524">
    <property type="term" value="F:ATP binding"/>
    <property type="evidence" value="ECO:0007669"/>
    <property type="project" value="UniProtKB-KW"/>
</dbReference>
<dbReference type="GO" id="GO:0016887">
    <property type="term" value="F:ATP hydrolysis activity"/>
    <property type="evidence" value="ECO:0007669"/>
    <property type="project" value="InterPro"/>
</dbReference>
<dbReference type="GO" id="GO:0003678">
    <property type="term" value="F:DNA helicase activity"/>
    <property type="evidence" value="ECO:0000318"/>
    <property type="project" value="GO_Central"/>
</dbReference>
<dbReference type="GO" id="GO:0000492">
    <property type="term" value="P:box C/D snoRNP assembly"/>
    <property type="evidence" value="ECO:0000315"/>
    <property type="project" value="WormBase"/>
</dbReference>
<dbReference type="GO" id="GO:0006338">
    <property type="term" value="P:chromatin remodeling"/>
    <property type="evidence" value="ECO:0000318"/>
    <property type="project" value="GO_Central"/>
</dbReference>
<dbReference type="GO" id="GO:0006281">
    <property type="term" value="P:DNA repair"/>
    <property type="evidence" value="ECO:0007669"/>
    <property type="project" value="UniProtKB-KW"/>
</dbReference>
<dbReference type="GO" id="GO:0002119">
    <property type="term" value="P:nematode larval development"/>
    <property type="evidence" value="ECO:0000315"/>
    <property type="project" value="WormBase"/>
</dbReference>
<dbReference type="GO" id="GO:0045727">
    <property type="term" value="P:positive regulation of translation"/>
    <property type="evidence" value="ECO:0000315"/>
    <property type="project" value="WormBase"/>
</dbReference>
<dbReference type="GO" id="GO:0006357">
    <property type="term" value="P:regulation of transcription by RNA polymerase II"/>
    <property type="evidence" value="ECO:0000318"/>
    <property type="project" value="GO_Central"/>
</dbReference>
<dbReference type="GO" id="GO:0031929">
    <property type="term" value="P:TOR signaling"/>
    <property type="evidence" value="ECO:0000315"/>
    <property type="project" value="WormBase"/>
</dbReference>
<dbReference type="FunFam" id="1.10.8.60:FF:000010">
    <property type="entry name" value="RuvB-like helicase"/>
    <property type="match status" value="1"/>
</dbReference>
<dbReference type="FunFam" id="2.40.50.360:FF:000001">
    <property type="entry name" value="RuvB-like helicase"/>
    <property type="match status" value="1"/>
</dbReference>
<dbReference type="Gene3D" id="1.10.8.60">
    <property type="match status" value="1"/>
</dbReference>
<dbReference type="Gene3D" id="3.40.50.300">
    <property type="entry name" value="P-loop containing nucleotide triphosphate hydrolases"/>
    <property type="match status" value="1"/>
</dbReference>
<dbReference type="Gene3D" id="2.40.50.360">
    <property type="entry name" value="RuvB-like helicase, domain II"/>
    <property type="match status" value="1"/>
</dbReference>
<dbReference type="InterPro" id="IPR003593">
    <property type="entry name" value="AAA+_ATPase"/>
</dbReference>
<dbReference type="InterPro" id="IPR027417">
    <property type="entry name" value="P-loop_NTPase"/>
</dbReference>
<dbReference type="InterPro" id="IPR027238">
    <property type="entry name" value="RuvB-like"/>
</dbReference>
<dbReference type="InterPro" id="IPR041048">
    <property type="entry name" value="RuvB-like_C"/>
</dbReference>
<dbReference type="InterPro" id="IPR042487">
    <property type="entry name" value="RuvBL1/2_DNA/RNA_bd_dom"/>
</dbReference>
<dbReference type="InterPro" id="IPR010339">
    <property type="entry name" value="TIP49_P-loop"/>
</dbReference>
<dbReference type="PANTHER" id="PTHR11093">
    <property type="entry name" value="RUVB-RELATED REPTIN AND PONTIN"/>
    <property type="match status" value="1"/>
</dbReference>
<dbReference type="Pfam" id="PF06068">
    <property type="entry name" value="TIP49"/>
    <property type="match status" value="1"/>
</dbReference>
<dbReference type="Pfam" id="PF17856">
    <property type="entry name" value="TIP49_C"/>
    <property type="match status" value="1"/>
</dbReference>
<dbReference type="SMART" id="SM00382">
    <property type="entry name" value="AAA"/>
    <property type="match status" value="1"/>
</dbReference>
<dbReference type="SUPFAM" id="SSF52540">
    <property type="entry name" value="P-loop containing nucleoside triphosphate hydrolases"/>
    <property type="match status" value="1"/>
</dbReference>
<comment type="function">
    <text evidence="2 3 5 6 7">Possesses single-stranded DNA-stimulated ATPase and ATP dependent DNA helicase (3' to 5') activity suggesting a role in nuclear processes such as recombination and transcription (By similarity). May participate in several chromatin remodeling complexes that mediate the ATP-dependent exchange of histones and remodel chromatin by shifting nucleosomes (By similarity). Involvement in these complexes is likely required for transcriptional activation of selected genes and DNA repair in response to DNA damage (By similarity). Involved in the Ce-Tor signaling pathway whereby it is required for the accumulation and localization of box C/D snoRNP to nucleoli to regulate ribosomal maturation and thus protein synthesis (PubMed:18804378). Antagonizes the transcriptional activity of transcription factor pha-4, to control postembryonic development and adult longevity (PubMed:17720918, PubMed:18804378). Has a role in pharyngeal development (PubMed:17720918). Has a role in gonadal development (PubMed:25437307).</text>
</comment>
<comment type="catalytic activity">
    <reaction evidence="1">
        <text>ATP + H2O = ADP + phosphate + H(+)</text>
        <dbReference type="Rhea" id="RHEA:13065"/>
        <dbReference type="ChEBI" id="CHEBI:15377"/>
        <dbReference type="ChEBI" id="CHEBI:15378"/>
        <dbReference type="ChEBI" id="CHEBI:30616"/>
        <dbReference type="ChEBI" id="CHEBI:43474"/>
        <dbReference type="ChEBI" id="CHEBI:456216"/>
        <dbReference type="EC" id="3.6.4.12"/>
    </reaction>
</comment>
<comment type="subunit">
    <text evidence="3">Forms homohexameric rings. May form a dodecamer with ruvb-2 made of two stacked hexameric rings.</text>
</comment>
<comment type="interaction">
    <interactant intactId="EBI-316213">
        <id>O17607</id>
    </interactant>
    <interactant intactId="EBI-316221">
        <id>Q9GZH2</id>
        <label>ruvb-2</label>
    </interactant>
    <organismsDiffer>false</organismsDiffer>
    <experiments>7</experiments>
</comment>
<comment type="subcellular location">
    <subcellularLocation>
        <location evidence="7">Cytoplasm</location>
    </subcellularLocation>
    <subcellularLocation>
        <location evidence="7">Nucleus</location>
    </subcellularLocation>
</comment>
<comment type="tissue specificity">
    <text evidence="7">Expressed in gonadal cells.</text>
</comment>
<comment type="developmental stage">
    <text evidence="5">Expressed in most cells of the early embryo. From the two-cell stage until late embryogenesis, expression is restricted to pharyngeal cells. Detected in two intestinal cells during the larval stage.</text>
</comment>
<comment type="disruption phenotype">
    <text evidence="5 6 7">RNAi-mediated knockdown results in arrest at larval stage L3, with less than 40% forming a mature vulva, lipid accumulation, epidermal granule formation and reduced protein synthesis (PubMed:17720918, PubMed:18804378). There is also gonadal detachment during gonad migration (PubMed:25437307).</text>
</comment>
<comment type="similarity">
    <text evidence="9">Belongs to the RuvB family.</text>
</comment>
<sequence length="476" mass="52512">MDMEVDEAISGTSSSRLAPIEEVKPTPKQIKRIAAHSHVKGLGIDTETQEAHYEAAGFVGQAPARTAASIVVDMIRLKCMAGRAVLIAGPPATGKTAIALAMSQELGDGVPFVPLVASEVFSNEVKKTEVLMRSFRRAIGLRVKETKDVYEGEVTELSPVEASDNSGMGKTISHLVLSLKTAKGSKQLKLDPSIYDSILKQRVEVGDVIYIEANSGIVKRVGRCDVYASEFDLEADEFVPMPKGDVRKSKDIVQNVSLHDLDIANARPQGRQGDVSNIVSQLMTPKKTEVTDRLRSEINKVVNEYIESGVAELMPGVLFIDEVHMLDVECFTYLYRALESPMAPVVVFATNRGTTTVRGLGDKAPHGIPPEMLDRLMIIPTMKYNEEDIRKILVHRTEAENVQFEEKAFDLLSKVGAEKSLRYALQLIAPARLCAQTCGREVIEVEDVDRCTKLFMDRGESLKKAEEEMRQPKNKK</sequence>
<organism evidence="10">
    <name type="scientific">Caenorhabditis elegans</name>
    <dbReference type="NCBI Taxonomy" id="6239"/>
    <lineage>
        <taxon>Eukaryota</taxon>
        <taxon>Metazoa</taxon>
        <taxon>Ecdysozoa</taxon>
        <taxon>Nematoda</taxon>
        <taxon>Chromadorea</taxon>
        <taxon>Rhabditida</taxon>
        <taxon>Rhabditina</taxon>
        <taxon>Rhabditomorpha</taxon>
        <taxon>Rhabditoidea</taxon>
        <taxon>Rhabditidae</taxon>
        <taxon>Peloderinae</taxon>
        <taxon>Caenorhabditis</taxon>
    </lineage>
</organism>
<evidence type="ECO:0000250" key="1">
    <source>
        <dbReference type="UniProtKB" id="P0A812"/>
    </source>
</evidence>
<evidence type="ECO:0000250" key="2">
    <source>
        <dbReference type="UniProtKB" id="Q03940"/>
    </source>
</evidence>
<evidence type="ECO:0000250" key="3">
    <source>
        <dbReference type="UniProtKB" id="Q9Y265"/>
    </source>
</evidence>
<evidence type="ECO:0000256" key="4">
    <source>
        <dbReference type="SAM" id="MobiDB-lite"/>
    </source>
</evidence>
<evidence type="ECO:0000269" key="5">
    <source>
    </source>
</evidence>
<evidence type="ECO:0000269" key="6">
    <source>
    </source>
</evidence>
<evidence type="ECO:0000269" key="7">
    <source>
    </source>
</evidence>
<evidence type="ECO:0000303" key="8">
    <source>
    </source>
</evidence>
<evidence type="ECO:0000305" key="9"/>
<evidence type="ECO:0000312" key="10">
    <source>
        <dbReference type="Proteomes" id="UP000001940"/>
    </source>
</evidence>
<evidence type="ECO:0000312" key="11">
    <source>
        <dbReference type="WormBase" id="C27H6.2"/>
    </source>
</evidence>
<feature type="chain" id="PRO_0000434944" description="RuvB-like 1" evidence="9">
    <location>
        <begin position="1"/>
        <end position="476"/>
    </location>
</feature>
<feature type="region of interest" description="Disordered" evidence="4">
    <location>
        <begin position="1"/>
        <end position="23"/>
    </location>
</feature>
<feature type="binding site" evidence="9">
    <location>
        <begin position="89"/>
        <end position="96"/>
    </location>
    <ligand>
        <name>ATP</name>
        <dbReference type="ChEBI" id="CHEBI:30616"/>
    </ligand>
</feature>
<feature type="mutagenesis site" description="In px34; results in arrest at larval stage L3, but with continued pharyngeal pumping regardless of arrest, perturbed vulval development, blocked gonadogenesis, increased intestinal lipids, abundant epidermal granules and smaller nucleoli." evidence="5 6">
    <original>E</original>
    <variation>K</variation>
    <location>
        <position position="371"/>
    </location>
</feature>
<keyword id="KW-0067">ATP-binding</keyword>
<keyword id="KW-0156">Chromatin regulator</keyword>
<keyword id="KW-0963">Cytoplasm</keyword>
<keyword id="KW-0227">DNA damage</keyword>
<keyword id="KW-0234">DNA repair</keyword>
<keyword id="KW-0347">Helicase</keyword>
<keyword id="KW-0378">Hydrolase</keyword>
<keyword id="KW-0547">Nucleotide-binding</keyword>
<keyword id="KW-0539">Nucleus</keyword>
<keyword id="KW-1185">Reference proteome</keyword>
<keyword id="KW-0804">Transcription</keyword>
<keyword id="KW-0805">Transcription regulation</keyword>
<reference evidence="10" key="1">
    <citation type="journal article" date="1998" name="Science">
        <title>Genome sequence of the nematode C. elegans: a platform for investigating biology.</title>
        <authorList>
            <consortium name="The C. elegans sequencing consortium"/>
        </authorList>
    </citation>
    <scope>NUCLEOTIDE SEQUENCE [LARGE SCALE GENOMIC DNA]</scope>
    <source>
        <strain evidence="10">Bristol N2</strain>
    </source>
</reference>
<reference evidence="9" key="2">
    <citation type="journal article" date="2007" name="Genetics">
        <title>Genetic suppressors of Caenorhabditis elegans pha-4/FoxA identify the predicted AAA helicase ruvb-1/RuvB.</title>
        <authorList>
            <person name="Updike D.L."/>
            <person name="Mango S.E."/>
        </authorList>
    </citation>
    <scope>FUNCTION</scope>
    <scope>DEVELOPMENTAL STAGE</scope>
    <scope>DISRUPTION PHENOTYPE</scope>
    <scope>MUTAGENESIS OF GLU-371</scope>
</reference>
<reference evidence="9" key="3">
    <citation type="journal article" date="2008" name="Curr. Biol.">
        <title>The Target of Rapamycin pathway antagonizes pha-4/FoxA to control development and aging.</title>
        <authorList>
            <person name="Sheaffer K.L."/>
            <person name="Updike D.L."/>
            <person name="Mango S.E."/>
        </authorList>
    </citation>
    <scope>FUNCTION</scope>
    <scope>DISRUPTION PHENOTYPE</scope>
    <scope>MUTAGENESIS OF GLU-371</scope>
</reference>
<reference evidence="9" key="4">
    <citation type="journal article" date="2014" name="Elife">
        <title>LINKIN, a new transmembrane protein necessary for cell adhesion.</title>
        <authorList>
            <person name="Kato M."/>
            <person name="Chou T.F."/>
            <person name="Yu C.Z."/>
            <person name="DeModena J."/>
            <person name="Sternberg P.W."/>
        </authorList>
    </citation>
    <scope>FUNCTION</scope>
    <scope>SUBCELLULAR LOCATION</scope>
    <scope>TISSUE SPECIFICITY</scope>
    <scope>DISRUPTION PHENOTYPE</scope>
</reference>
<gene>
    <name evidence="11" type="primary">ruvb-1</name>
    <name evidence="11" type="ORF">C27H6.2</name>
</gene>
<name>RUVB1_CAEEL</name>
<protein>
    <recommendedName>
        <fullName evidence="3">RuvB-like 1</fullName>
        <ecNumber evidence="1">3.6.4.12</ecNumber>
    </recommendedName>
    <alternativeName>
        <fullName evidence="8">Pontin</fullName>
    </alternativeName>
</protein>
<accession>O17607</accession>
<proteinExistence type="evidence at protein level"/>